<gene>
    <name type="primary">LYK2</name>
    <name type="ordered locus">At3g01840</name>
    <name type="ORF">F28J7.37</name>
</gene>
<proteinExistence type="evidence at transcript level"/>
<sequence length="654" mass="73162">MAVSVSKQYMTSLVVILLFISLSSLSPTSTSHSCDPVEEEEEASSFGYVCHSNLQKCHTFAILRAKPPFYSLSDLSRHLGLDADDEYVPKGQLLLIPIECRCNGSIYEASLIKNCVKGDTFRSVSQSLQGLTTCLSIREKNPHISEDKLGDNIKLRLAIRCSCPQEGVSNASFLVTYPVGVRDSVSSLAVRFNTTEDAIVSANNKSGVVPLKPALIPLDHKPEKQGSRKRNPSKKKRSKMKLMIAVSSAIAGVCGLVTLMVFGYLHWKKETQIQTQTQKWISNKDPETRQLSLSIRTTSDKKISFEGSQDGSILDSHNTVGTTTPRKPVLEIYAFEELEKATENFSSSNHIKGSVYFGSLKGKDLAIKQVNADEMKRFDFGLLNDQSHYYNHNVIRVLGTCFREIDQDSYLVFEYARNGSLWDWIQNKLAIKNQFIESCYCFLAWKQRIKICHDVAIALKYMHRINYVHGNIKSRNIFLNEDLRGKVGNFGMSKCVTNELATEENLIESSLSPASDIFAYGIIVMEVLSGQTPDMLLGLQEVETTSLGTQETFVSEWSRLRRLLGDKEKLREVMDSTLGESYSVDSAFEIASIARDCTAEEAESRPSAVEIAERVSRLVDDDEDEEDEAVIDRESTLISESSYKPLVKKSSIID</sequence>
<comment type="function">
    <text evidence="1">May recognize microbe-derived N-acetylglucosamine (NAG)-containing ligands.</text>
</comment>
<comment type="subcellular location">
    <subcellularLocation>
        <location evidence="1">Cell membrane</location>
        <topology evidence="1">Single-pass membrane protein</topology>
    </subcellularLocation>
</comment>
<comment type="domain">
    <text>The protein kinase domain is predicted to be catalytically inactive.</text>
</comment>
<comment type="similarity">
    <text evidence="3">Belongs to the protein kinase superfamily. Ser/Thr protein kinase family.</text>
</comment>
<name>LYK2_ARATH</name>
<protein>
    <recommendedName>
        <fullName>Protein LYK2</fullName>
    </recommendedName>
    <alternativeName>
        <fullName>LysM domain receptor-like kinase 2</fullName>
    </alternativeName>
    <alternativeName>
        <fullName>LysM-containing receptor-like kinase 2</fullName>
    </alternativeName>
</protein>
<keyword id="KW-0067">ATP-binding</keyword>
<keyword id="KW-1003">Cell membrane</keyword>
<keyword id="KW-1015">Disulfide bond</keyword>
<keyword id="KW-0325">Glycoprotein</keyword>
<keyword id="KW-0472">Membrane</keyword>
<keyword id="KW-0547">Nucleotide-binding</keyword>
<keyword id="KW-1185">Reference proteome</keyword>
<keyword id="KW-0677">Repeat</keyword>
<keyword id="KW-0732">Signal</keyword>
<keyword id="KW-0808">Transferase</keyword>
<keyword id="KW-0812">Transmembrane</keyword>
<keyword id="KW-1133">Transmembrane helix</keyword>
<evidence type="ECO:0000250" key="1"/>
<evidence type="ECO:0000255" key="2"/>
<evidence type="ECO:0000255" key="3">
    <source>
        <dbReference type="PROSITE-ProRule" id="PRU00159"/>
    </source>
</evidence>
<evidence type="ECO:0000256" key="4">
    <source>
        <dbReference type="SAM" id="MobiDB-lite"/>
    </source>
</evidence>
<dbReference type="EMBL" id="AC010797">
    <property type="protein sequence ID" value="AAF03457.1"/>
    <property type="molecule type" value="Genomic_DNA"/>
</dbReference>
<dbReference type="EMBL" id="CP002686">
    <property type="protein sequence ID" value="AEE73723.1"/>
    <property type="molecule type" value="Genomic_DNA"/>
</dbReference>
<dbReference type="RefSeq" id="NP_186833.1">
    <property type="nucleotide sequence ID" value="NM_111050.2"/>
</dbReference>
<dbReference type="SMR" id="Q9SGI7"/>
<dbReference type="FunCoup" id="Q9SGI7">
    <property type="interactions" value="47"/>
</dbReference>
<dbReference type="STRING" id="3702.Q9SGI7"/>
<dbReference type="GlyCosmos" id="Q9SGI7">
    <property type="glycosylation" value="4 sites, No reported glycans"/>
</dbReference>
<dbReference type="GlyGen" id="Q9SGI7">
    <property type="glycosylation" value="4 sites"/>
</dbReference>
<dbReference type="PaxDb" id="3702-AT3G01840.1"/>
<dbReference type="ProteomicsDB" id="238533"/>
<dbReference type="EnsemblPlants" id="AT3G01840.1">
    <property type="protein sequence ID" value="AT3G01840.1"/>
    <property type="gene ID" value="AT3G01840"/>
</dbReference>
<dbReference type="GeneID" id="820047"/>
<dbReference type="Gramene" id="AT3G01840.1">
    <property type="protein sequence ID" value="AT3G01840.1"/>
    <property type="gene ID" value="AT3G01840"/>
</dbReference>
<dbReference type="KEGG" id="ath:AT3G01840"/>
<dbReference type="Araport" id="AT3G01840"/>
<dbReference type="TAIR" id="AT3G01840">
    <property type="gene designation" value="LYK2"/>
</dbReference>
<dbReference type="eggNOG" id="KOG1187">
    <property type="taxonomic scope" value="Eukaryota"/>
</dbReference>
<dbReference type="HOGENOM" id="CLU_000288_99_1_1"/>
<dbReference type="InParanoid" id="Q9SGI7"/>
<dbReference type="OMA" id="NFGMAKC"/>
<dbReference type="PhylomeDB" id="Q9SGI7"/>
<dbReference type="PRO" id="PR:Q9SGI7"/>
<dbReference type="Proteomes" id="UP000006548">
    <property type="component" value="Chromosome 3"/>
</dbReference>
<dbReference type="ExpressionAtlas" id="Q9SGI7">
    <property type="expression patterns" value="baseline and differential"/>
</dbReference>
<dbReference type="GO" id="GO:0005886">
    <property type="term" value="C:plasma membrane"/>
    <property type="evidence" value="ECO:0000314"/>
    <property type="project" value="TAIR"/>
</dbReference>
<dbReference type="GO" id="GO:0005524">
    <property type="term" value="F:ATP binding"/>
    <property type="evidence" value="ECO:0007669"/>
    <property type="project" value="UniProtKB-KW"/>
</dbReference>
<dbReference type="GO" id="GO:0004672">
    <property type="term" value="F:protein kinase activity"/>
    <property type="evidence" value="ECO:0007669"/>
    <property type="project" value="InterPro"/>
</dbReference>
<dbReference type="Gene3D" id="3.30.200.20">
    <property type="entry name" value="Phosphorylase Kinase, domain 1"/>
    <property type="match status" value="1"/>
</dbReference>
<dbReference type="Gene3D" id="1.10.510.10">
    <property type="entry name" value="Transferase(Phosphotransferase) domain 1"/>
    <property type="match status" value="1"/>
</dbReference>
<dbReference type="InterPro" id="IPR011009">
    <property type="entry name" value="Kinase-like_dom_sf"/>
</dbReference>
<dbReference type="InterPro" id="IPR018392">
    <property type="entry name" value="LysM_dom"/>
</dbReference>
<dbReference type="InterPro" id="IPR052611">
    <property type="entry name" value="Plant_RLK_LysM"/>
</dbReference>
<dbReference type="InterPro" id="IPR000719">
    <property type="entry name" value="Prot_kinase_dom"/>
</dbReference>
<dbReference type="InterPro" id="IPR001245">
    <property type="entry name" value="Ser-Thr/Tyr_kinase_cat_dom"/>
</dbReference>
<dbReference type="PANTHER" id="PTHR45927">
    <property type="entry name" value="LYSM-DOMAIN RECEPTOR-LIKE KINASE-RELATED"/>
    <property type="match status" value="1"/>
</dbReference>
<dbReference type="PANTHER" id="PTHR45927:SF13">
    <property type="entry name" value="PROTEIN LYK2"/>
    <property type="match status" value="1"/>
</dbReference>
<dbReference type="Pfam" id="PF01476">
    <property type="entry name" value="LysM"/>
    <property type="match status" value="1"/>
</dbReference>
<dbReference type="Pfam" id="PF07714">
    <property type="entry name" value="PK_Tyr_Ser-Thr"/>
    <property type="match status" value="1"/>
</dbReference>
<dbReference type="SUPFAM" id="SSF56112">
    <property type="entry name" value="Protein kinase-like (PK-like)"/>
    <property type="match status" value="1"/>
</dbReference>
<dbReference type="PROSITE" id="PS50011">
    <property type="entry name" value="PROTEIN_KINASE_DOM"/>
    <property type="match status" value="1"/>
</dbReference>
<accession>Q9SGI7</accession>
<reference key="1">
    <citation type="journal article" date="2000" name="Nature">
        <title>Sequence and analysis of chromosome 3 of the plant Arabidopsis thaliana.</title>
        <authorList>
            <person name="Salanoubat M."/>
            <person name="Lemcke K."/>
            <person name="Rieger M."/>
            <person name="Ansorge W."/>
            <person name="Unseld M."/>
            <person name="Fartmann B."/>
            <person name="Valle G."/>
            <person name="Bloecker H."/>
            <person name="Perez-Alonso M."/>
            <person name="Obermaier B."/>
            <person name="Delseny M."/>
            <person name="Boutry M."/>
            <person name="Grivell L.A."/>
            <person name="Mache R."/>
            <person name="Puigdomenech P."/>
            <person name="De Simone V."/>
            <person name="Choisne N."/>
            <person name="Artiguenave F."/>
            <person name="Robert C."/>
            <person name="Brottier P."/>
            <person name="Wincker P."/>
            <person name="Cattolico L."/>
            <person name="Weissenbach J."/>
            <person name="Saurin W."/>
            <person name="Quetier F."/>
            <person name="Schaefer M."/>
            <person name="Mueller-Auer S."/>
            <person name="Gabel C."/>
            <person name="Fuchs M."/>
            <person name="Benes V."/>
            <person name="Wurmbach E."/>
            <person name="Drzonek H."/>
            <person name="Erfle H."/>
            <person name="Jordan N."/>
            <person name="Bangert S."/>
            <person name="Wiedelmann R."/>
            <person name="Kranz H."/>
            <person name="Voss H."/>
            <person name="Holland R."/>
            <person name="Brandt P."/>
            <person name="Nyakatura G."/>
            <person name="Vezzi A."/>
            <person name="D'Angelo M."/>
            <person name="Pallavicini A."/>
            <person name="Toppo S."/>
            <person name="Simionati B."/>
            <person name="Conrad A."/>
            <person name="Hornischer K."/>
            <person name="Kauer G."/>
            <person name="Loehnert T.-H."/>
            <person name="Nordsiek G."/>
            <person name="Reichelt J."/>
            <person name="Scharfe M."/>
            <person name="Schoen O."/>
            <person name="Bargues M."/>
            <person name="Terol J."/>
            <person name="Climent J."/>
            <person name="Navarro P."/>
            <person name="Collado C."/>
            <person name="Perez-Perez A."/>
            <person name="Ottenwaelder B."/>
            <person name="Duchemin D."/>
            <person name="Cooke R."/>
            <person name="Laudie M."/>
            <person name="Berger-Llauro C."/>
            <person name="Purnelle B."/>
            <person name="Masuy D."/>
            <person name="de Haan M."/>
            <person name="Maarse A.C."/>
            <person name="Alcaraz J.-P."/>
            <person name="Cottet A."/>
            <person name="Casacuberta E."/>
            <person name="Monfort A."/>
            <person name="Argiriou A."/>
            <person name="Flores M."/>
            <person name="Liguori R."/>
            <person name="Vitale D."/>
            <person name="Mannhaupt G."/>
            <person name="Haase D."/>
            <person name="Schoof H."/>
            <person name="Rudd S."/>
            <person name="Zaccaria P."/>
            <person name="Mewes H.-W."/>
            <person name="Mayer K.F.X."/>
            <person name="Kaul S."/>
            <person name="Town C.D."/>
            <person name="Koo H.L."/>
            <person name="Tallon L.J."/>
            <person name="Jenkins J."/>
            <person name="Rooney T."/>
            <person name="Rizzo M."/>
            <person name="Walts A."/>
            <person name="Utterback T."/>
            <person name="Fujii C.Y."/>
            <person name="Shea T.P."/>
            <person name="Creasy T.H."/>
            <person name="Haas B."/>
            <person name="Maiti R."/>
            <person name="Wu D."/>
            <person name="Peterson J."/>
            <person name="Van Aken S."/>
            <person name="Pai G."/>
            <person name="Militscher J."/>
            <person name="Sellers P."/>
            <person name="Gill J.E."/>
            <person name="Feldblyum T.V."/>
            <person name="Preuss D."/>
            <person name="Lin X."/>
            <person name="Nierman W.C."/>
            <person name="Salzberg S.L."/>
            <person name="White O."/>
            <person name="Venter J.C."/>
            <person name="Fraser C.M."/>
            <person name="Kaneko T."/>
            <person name="Nakamura Y."/>
            <person name="Sato S."/>
            <person name="Kato T."/>
            <person name="Asamizu E."/>
            <person name="Sasamoto S."/>
            <person name="Kimura T."/>
            <person name="Idesawa K."/>
            <person name="Kawashima K."/>
            <person name="Kishida Y."/>
            <person name="Kiyokawa C."/>
            <person name="Kohara M."/>
            <person name="Matsumoto M."/>
            <person name="Matsuno A."/>
            <person name="Muraki A."/>
            <person name="Nakayama S."/>
            <person name="Nakazaki N."/>
            <person name="Shinpo S."/>
            <person name="Takeuchi C."/>
            <person name="Wada T."/>
            <person name="Watanabe A."/>
            <person name="Yamada M."/>
            <person name="Yasuda M."/>
            <person name="Tabata S."/>
        </authorList>
    </citation>
    <scope>NUCLEOTIDE SEQUENCE [LARGE SCALE GENOMIC DNA]</scope>
    <source>
        <strain>cv. Columbia</strain>
    </source>
</reference>
<reference key="2">
    <citation type="journal article" date="2017" name="Plant J.">
        <title>Araport11: a complete reannotation of the Arabidopsis thaliana reference genome.</title>
        <authorList>
            <person name="Cheng C.Y."/>
            <person name="Krishnakumar V."/>
            <person name="Chan A.P."/>
            <person name="Thibaud-Nissen F."/>
            <person name="Schobel S."/>
            <person name="Town C.D."/>
        </authorList>
    </citation>
    <scope>GENOME REANNOTATION</scope>
    <source>
        <strain>cv. Columbia</strain>
    </source>
</reference>
<organism>
    <name type="scientific">Arabidopsis thaliana</name>
    <name type="common">Mouse-ear cress</name>
    <dbReference type="NCBI Taxonomy" id="3702"/>
    <lineage>
        <taxon>Eukaryota</taxon>
        <taxon>Viridiplantae</taxon>
        <taxon>Streptophyta</taxon>
        <taxon>Embryophyta</taxon>
        <taxon>Tracheophyta</taxon>
        <taxon>Spermatophyta</taxon>
        <taxon>Magnoliopsida</taxon>
        <taxon>eudicotyledons</taxon>
        <taxon>Gunneridae</taxon>
        <taxon>Pentapetalae</taxon>
        <taxon>rosids</taxon>
        <taxon>malvids</taxon>
        <taxon>Brassicales</taxon>
        <taxon>Brassicaceae</taxon>
        <taxon>Camelineae</taxon>
        <taxon>Arabidopsis</taxon>
    </lineage>
</organism>
<feature type="signal peptide" evidence="2">
    <location>
        <begin position="1"/>
        <end position="25"/>
    </location>
</feature>
<feature type="chain" id="PRO_0000420828" description="Protein LYK2">
    <location>
        <begin position="26"/>
        <end position="654"/>
    </location>
</feature>
<feature type="topological domain" description="Extracellular" evidence="2">
    <location>
        <begin position="26"/>
        <end position="241"/>
    </location>
</feature>
<feature type="transmembrane region" description="Helical" evidence="2">
    <location>
        <begin position="242"/>
        <end position="262"/>
    </location>
</feature>
<feature type="topological domain" description="Cytoplasmic" evidence="2">
    <location>
        <begin position="263"/>
        <end position="654"/>
    </location>
</feature>
<feature type="repeat" description="LysM; degenerate">
    <location>
        <begin position="177"/>
        <end position="217"/>
    </location>
</feature>
<feature type="domain" description="Protein kinase" evidence="3">
    <location>
        <begin position="324"/>
        <end position="619"/>
    </location>
</feature>
<feature type="region of interest" description="Disordered" evidence="4">
    <location>
        <begin position="218"/>
        <end position="238"/>
    </location>
</feature>
<feature type="compositionally biased region" description="Basic residues" evidence="4">
    <location>
        <begin position="227"/>
        <end position="238"/>
    </location>
</feature>
<feature type="binding site" evidence="3">
    <location>
        <begin position="330"/>
        <end position="338"/>
    </location>
    <ligand>
        <name>ATP</name>
        <dbReference type="ChEBI" id="CHEBI:30616"/>
    </ligand>
</feature>
<feature type="binding site" evidence="3">
    <location>
        <position position="368"/>
    </location>
    <ligand>
        <name>ATP</name>
        <dbReference type="ChEBI" id="CHEBI:30616"/>
    </ligand>
</feature>
<feature type="glycosylation site" description="N-linked (GlcNAc...) asparagine" evidence="2">
    <location>
        <position position="103"/>
    </location>
</feature>
<feature type="glycosylation site" description="N-linked (GlcNAc...) asparagine" evidence="2">
    <location>
        <position position="170"/>
    </location>
</feature>
<feature type="glycosylation site" description="N-linked (GlcNAc...) asparagine" evidence="2">
    <location>
        <position position="193"/>
    </location>
</feature>
<feature type="glycosylation site" description="N-linked (GlcNAc...) asparagine" evidence="2">
    <location>
        <position position="204"/>
    </location>
</feature>
<feature type="disulfide bond" evidence="1">
    <location>
        <begin position="50"/>
        <end position="102"/>
    </location>
</feature>
<feature type="disulfide bond" evidence="1">
    <location>
        <begin position="57"/>
        <end position="163"/>
    </location>
</feature>
<feature type="disulfide bond" evidence="1">
    <location>
        <begin position="100"/>
        <end position="161"/>
    </location>
</feature>